<comment type="function">
    <text evidence="1">Conversion of NADPH, generated by peripheral catabolic pathways, to NADH, which can enter the respiratory chain for energy generation.</text>
</comment>
<comment type="catalytic activity">
    <reaction evidence="1">
        <text>NAD(+) + NADPH = NADH + NADP(+)</text>
        <dbReference type="Rhea" id="RHEA:11692"/>
        <dbReference type="ChEBI" id="CHEBI:57540"/>
        <dbReference type="ChEBI" id="CHEBI:57783"/>
        <dbReference type="ChEBI" id="CHEBI:57945"/>
        <dbReference type="ChEBI" id="CHEBI:58349"/>
        <dbReference type="EC" id="1.6.1.1"/>
    </reaction>
</comment>
<comment type="cofactor">
    <cofactor evidence="1">
        <name>FAD</name>
        <dbReference type="ChEBI" id="CHEBI:57692"/>
    </cofactor>
    <text evidence="1">Binds 1 FAD per subunit.</text>
</comment>
<comment type="subcellular location">
    <subcellularLocation>
        <location evidence="1">Cytoplasm</location>
    </subcellularLocation>
</comment>
<comment type="similarity">
    <text evidence="1">Belongs to the class-I pyridine nucleotide-disulfide oxidoreductase family.</text>
</comment>
<gene>
    <name evidence="1" type="primary">sthA</name>
    <name type="ordered locus">Pmen_1603</name>
</gene>
<dbReference type="EC" id="1.6.1.1" evidence="1"/>
<dbReference type="EMBL" id="CP000680">
    <property type="protein sequence ID" value="ABP84367.1"/>
    <property type="molecule type" value="Genomic_DNA"/>
</dbReference>
<dbReference type="SMR" id="A4XSQ1"/>
<dbReference type="STRING" id="399739.Pmen_1603"/>
<dbReference type="KEGG" id="pmy:Pmen_1603"/>
<dbReference type="PATRIC" id="fig|399739.8.peg.1625"/>
<dbReference type="eggNOG" id="COG1249">
    <property type="taxonomic scope" value="Bacteria"/>
</dbReference>
<dbReference type="HOGENOM" id="CLU_016755_0_0_6"/>
<dbReference type="OrthoDB" id="9800167at2"/>
<dbReference type="GO" id="GO:0005829">
    <property type="term" value="C:cytosol"/>
    <property type="evidence" value="ECO:0007669"/>
    <property type="project" value="TreeGrafter"/>
</dbReference>
<dbReference type="GO" id="GO:0004148">
    <property type="term" value="F:dihydrolipoyl dehydrogenase (NADH) activity"/>
    <property type="evidence" value="ECO:0007669"/>
    <property type="project" value="TreeGrafter"/>
</dbReference>
<dbReference type="GO" id="GO:0050660">
    <property type="term" value="F:flavin adenine dinucleotide binding"/>
    <property type="evidence" value="ECO:0007669"/>
    <property type="project" value="TreeGrafter"/>
</dbReference>
<dbReference type="GO" id="GO:0003957">
    <property type="term" value="F:NAD(P)+ transhydrogenase (Si-specific) activity"/>
    <property type="evidence" value="ECO:0007669"/>
    <property type="project" value="UniProtKB-UniRule"/>
</dbReference>
<dbReference type="GO" id="GO:0006103">
    <property type="term" value="P:2-oxoglutarate metabolic process"/>
    <property type="evidence" value="ECO:0007669"/>
    <property type="project" value="TreeGrafter"/>
</dbReference>
<dbReference type="GO" id="GO:0006739">
    <property type="term" value="P:NADP metabolic process"/>
    <property type="evidence" value="ECO:0007669"/>
    <property type="project" value="UniProtKB-UniRule"/>
</dbReference>
<dbReference type="FunFam" id="3.30.390.30:FF:000002">
    <property type="entry name" value="Soluble pyridine nucleotide transhydrogenase"/>
    <property type="match status" value="1"/>
</dbReference>
<dbReference type="FunFam" id="3.50.50.60:FF:000008">
    <property type="entry name" value="Soluble pyridine nucleotide transhydrogenase"/>
    <property type="match status" value="1"/>
</dbReference>
<dbReference type="Gene3D" id="3.30.390.30">
    <property type="match status" value="1"/>
</dbReference>
<dbReference type="Gene3D" id="3.50.50.60">
    <property type="entry name" value="FAD/NAD(P)-binding domain"/>
    <property type="match status" value="2"/>
</dbReference>
<dbReference type="HAMAP" id="MF_00247">
    <property type="entry name" value="SthA"/>
    <property type="match status" value="1"/>
</dbReference>
<dbReference type="InterPro" id="IPR050151">
    <property type="entry name" value="Class-I_Pyr_Nuc-Dis_Oxidored"/>
</dbReference>
<dbReference type="InterPro" id="IPR036188">
    <property type="entry name" value="FAD/NAD-bd_sf"/>
</dbReference>
<dbReference type="InterPro" id="IPR023753">
    <property type="entry name" value="FAD/NAD-binding_dom"/>
</dbReference>
<dbReference type="InterPro" id="IPR016156">
    <property type="entry name" value="FAD/NAD-linked_Rdtase_dimer_sf"/>
</dbReference>
<dbReference type="InterPro" id="IPR001100">
    <property type="entry name" value="Pyr_nuc-diS_OxRdtase"/>
</dbReference>
<dbReference type="InterPro" id="IPR004099">
    <property type="entry name" value="Pyr_nucl-diS_OxRdtase_dimer"/>
</dbReference>
<dbReference type="InterPro" id="IPR022962">
    <property type="entry name" value="STH_gammaproteobact"/>
</dbReference>
<dbReference type="NCBIfam" id="NF003585">
    <property type="entry name" value="PRK05249.1"/>
    <property type="match status" value="1"/>
</dbReference>
<dbReference type="PANTHER" id="PTHR22912">
    <property type="entry name" value="DISULFIDE OXIDOREDUCTASE"/>
    <property type="match status" value="1"/>
</dbReference>
<dbReference type="PANTHER" id="PTHR22912:SF93">
    <property type="entry name" value="SOLUBLE PYRIDINE NUCLEOTIDE TRANSHYDROGENASE"/>
    <property type="match status" value="1"/>
</dbReference>
<dbReference type="Pfam" id="PF07992">
    <property type="entry name" value="Pyr_redox_2"/>
    <property type="match status" value="1"/>
</dbReference>
<dbReference type="Pfam" id="PF02852">
    <property type="entry name" value="Pyr_redox_dim"/>
    <property type="match status" value="1"/>
</dbReference>
<dbReference type="PIRSF" id="PIRSF000350">
    <property type="entry name" value="Mercury_reductase_MerA"/>
    <property type="match status" value="1"/>
</dbReference>
<dbReference type="PRINTS" id="PR00368">
    <property type="entry name" value="FADPNR"/>
</dbReference>
<dbReference type="PRINTS" id="PR00411">
    <property type="entry name" value="PNDRDTASEI"/>
</dbReference>
<dbReference type="SUPFAM" id="SSF51905">
    <property type="entry name" value="FAD/NAD(P)-binding domain"/>
    <property type="match status" value="1"/>
</dbReference>
<dbReference type="SUPFAM" id="SSF55424">
    <property type="entry name" value="FAD/NAD-linked reductases, dimerisation (C-terminal) domain"/>
    <property type="match status" value="1"/>
</dbReference>
<evidence type="ECO:0000255" key="1">
    <source>
        <dbReference type="HAMAP-Rule" id="MF_00247"/>
    </source>
</evidence>
<organism>
    <name type="scientific">Ectopseudomonas mendocina (strain ymp)</name>
    <name type="common">Pseudomonas mendocina</name>
    <dbReference type="NCBI Taxonomy" id="399739"/>
    <lineage>
        <taxon>Bacteria</taxon>
        <taxon>Pseudomonadati</taxon>
        <taxon>Pseudomonadota</taxon>
        <taxon>Gammaproteobacteria</taxon>
        <taxon>Pseudomonadales</taxon>
        <taxon>Pseudomonadaceae</taxon>
        <taxon>Ectopseudomonas</taxon>
    </lineage>
</organism>
<reference key="1">
    <citation type="submission" date="2007-04" db="EMBL/GenBank/DDBJ databases">
        <title>Complete sequence of Pseudomonas mendocina ymp.</title>
        <authorList>
            <consortium name="US DOE Joint Genome Institute"/>
            <person name="Copeland A."/>
            <person name="Lucas S."/>
            <person name="Lapidus A."/>
            <person name="Barry K."/>
            <person name="Glavina del Rio T."/>
            <person name="Dalin E."/>
            <person name="Tice H."/>
            <person name="Pitluck S."/>
            <person name="Kiss H."/>
            <person name="Brettin T."/>
            <person name="Detter J.C."/>
            <person name="Bruce D."/>
            <person name="Han C."/>
            <person name="Schmutz J."/>
            <person name="Larimer F."/>
            <person name="Land M."/>
            <person name="Hauser L."/>
            <person name="Kyrpides N."/>
            <person name="Mikhailova N."/>
            <person name="Hersman L."/>
            <person name="Dubois J."/>
            <person name="Maurice P."/>
            <person name="Richardson P."/>
        </authorList>
    </citation>
    <scope>NUCLEOTIDE SEQUENCE [LARGE SCALE GENOMIC DNA]</scope>
    <source>
        <strain>ymp</strain>
    </source>
</reference>
<proteinExistence type="inferred from homology"/>
<accession>A4XSQ1</accession>
<sequence length="464" mass="51015">MAVYNYDVVVLGSGPAGEGAAMNAAKAGRKVAVVDNRPLVGGNCTHLGTIPSKALRHSVRQIMQFNTNPMFRQIGEPRWFSFPDVLKSAEKVIAKQVTSRTGYYARNRIDTYFGTASFADEQTVEVVCLNGVVEKLVAKQIVIATGSRPYRPADVDFRHPRIYDSDTILSLGHTPRRLIIYGAGVIGCEYASIFSGLGVLVDLIDNRDQLLSFLDSEISDALSYHLRNNNVLIRHNEEYERIEGVENGVVLHLKSGKKIKADALLWCNGRTGNTDQLGLENIGIAVNSRGQIQVDEHYRTEVSNIYAAGDVIGWPSLASAAADQGRSAAGSIVENGSWRFVDDVPTGIYTIPEISSIGKTERELTQAKVPYEVGKAFFKGMARAQISVEPVGMLKILFHRETLEVLGVHCFGYQASEIVHIGQAIMNQKGEANSIKYFINTTFNYPTMAEAYRVAAFDGLNRLF</sequence>
<name>STHA_ECTM1</name>
<protein>
    <recommendedName>
        <fullName evidence="1">Soluble pyridine nucleotide transhydrogenase</fullName>
        <shortName evidence="1">STH</shortName>
        <ecNumber evidence="1">1.6.1.1</ecNumber>
    </recommendedName>
    <alternativeName>
        <fullName evidence="1">NAD(P)(+) transhydrogenase [B-specific]</fullName>
    </alternativeName>
</protein>
<feature type="chain" id="PRO_1000012564" description="Soluble pyridine nucleotide transhydrogenase">
    <location>
        <begin position="1"/>
        <end position="464"/>
    </location>
</feature>
<feature type="binding site" evidence="1">
    <location>
        <begin position="35"/>
        <end position="44"/>
    </location>
    <ligand>
        <name>FAD</name>
        <dbReference type="ChEBI" id="CHEBI:57692"/>
    </ligand>
</feature>
<keyword id="KW-0963">Cytoplasm</keyword>
<keyword id="KW-0274">FAD</keyword>
<keyword id="KW-0285">Flavoprotein</keyword>
<keyword id="KW-0520">NAD</keyword>
<keyword id="KW-0521">NADP</keyword>
<keyword id="KW-0560">Oxidoreductase</keyword>